<comment type="function">
    <text evidence="1 2 3">Regulatory component of the Usp12-46 deubiquitylase complex (By similarity). activates deubiquitination by increasing the catalytic turnover without increasing the affinity of deubiquitinating enzymes for the substrate (By similarity). The complex deubiquitylates the wg/wingless-signaling receptor arr/arrow, which stabilizes the receptor and increases its concentration at the cell surface; this enhances the sensitivity of cells to wg/wingless-signal stimulation. This increases the amplitude and spatial range of the signaling response to the wg/wingless morphogen gradient, facilitating the precise concentration-dependent regulation of its target genes. Together with Wdr20 and Usp12-46 required for wg/wingless-mediated signaling in the wing imaginal disc and for wg/wingless-dependent regulation of intestinal stem cell proliferation (By similarity).</text>
</comment>
<comment type="subunit">
    <text evidence="2">Catalytic component of the Usp12-46 deubiquitylase complex consisting of Usp12-46, Wdr20 and Uaf1; regulatory subunit that, together wtih Wdr20, stabilizes Usp12-46. The Usp12-46 deubiquitylase complex associates with arr/arrow; the interaction leads to deubiquitination and stabilization of arr/arrow.</text>
</comment>
<comment type="similarity">
    <text evidence="6">Belongs to the WD repeat WDR48 family.</text>
</comment>
<name>WDR48_DROVI</name>
<sequence length="667" mass="75372">MLTHKTCQARKKMQVSFVIRDAEEKQHRNGVNALQLDSNNGKLYSAGRDAIIRVWNTRTESNDKYIQSMEHHNDWVNDIVLCCNGRNLISASCDTTVKVWNAHKGFCMSTLRTHRDYVQALAYAKDREQVASAGLDKAIFLWDVNTLTALTASNNTVTTSSLTGSKDSIYSLAMNPSGTVIVSGSTENILRIWDPRTCMRSMKLRGHTENVRCLVVSPDGNQVVSGSSDGTIKVWNLGQQRCIQTIHVHKEGVWSLLMSENFQYIISGSRDRNIIVTEMRNPSNKMLVCEEKAPVLSLGYNIDKTGVWATTWNSDIRCWKLPMYDRCTLSSGGMDAQWTMGGTELACIKGGAAIKECTVLNDKRYIITKDSQDQVVVYDVLRVIKKEELGPVDYEEEVKKRNKQVYIPNWFTVDLKTGMPTIVLGQEEVDCFAAWVSIEAGLPECDDPTTEIKINYGKLLLEALLEYWTPPHSMPPNEMEPDVRGNGYFQVPKHTPVIFSEVGGRTVCRLLVRDAAGDSESTLLHETAPQWVTDVVIERNIPKFLKIPFFLQPHPQMTKPERTKKDRLVANEFIQCRKVCEHVLEKVLNAETTPSGGNANNSLQNSQSDANSEGSQLPAEERIELWCNDVIVDPNMDLRTVRHFIWKQSTDLTFQYKTKQNFNFDGK</sequence>
<dbReference type="EMBL" id="CH940667">
    <property type="protein sequence ID" value="EDW57193.1"/>
    <property type="molecule type" value="Genomic_DNA"/>
</dbReference>
<dbReference type="SMR" id="B4MFM2"/>
<dbReference type="FunCoup" id="B4MFM2">
    <property type="interactions" value="3176"/>
</dbReference>
<dbReference type="STRING" id="7244.B4MFM2"/>
<dbReference type="EnsemblMetazoa" id="FBtr0230934">
    <property type="protein sequence ID" value="FBpp0229426"/>
    <property type="gene ID" value="FBgn0202209"/>
</dbReference>
<dbReference type="EnsemblMetazoa" id="XM_032437228.1">
    <property type="protein sequence ID" value="XP_032293119.1"/>
    <property type="gene ID" value="LOC116651242"/>
</dbReference>
<dbReference type="GeneID" id="6636494"/>
<dbReference type="KEGG" id="dvi:6636494"/>
<dbReference type="eggNOG" id="KOG0308">
    <property type="taxonomic scope" value="Eukaryota"/>
</dbReference>
<dbReference type="HOGENOM" id="CLU_014960_0_1_1"/>
<dbReference type="InParanoid" id="B4MFM2"/>
<dbReference type="OMA" id="IRHYHIL"/>
<dbReference type="OrthoDB" id="2421129at2759"/>
<dbReference type="PhylomeDB" id="B4MFM2"/>
<dbReference type="Proteomes" id="UP000008792">
    <property type="component" value="Unassembled WGS sequence"/>
</dbReference>
<dbReference type="GO" id="GO:0043130">
    <property type="term" value="F:ubiquitin binding"/>
    <property type="evidence" value="ECO:0007669"/>
    <property type="project" value="TreeGrafter"/>
</dbReference>
<dbReference type="GO" id="GO:0000724">
    <property type="term" value="P:double-strand break repair via homologous recombination"/>
    <property type="evidence" value="ECO:0007669"/>
    <property type="project" value="TreeGrafter"/>
</dbReference>
<dbReference type="CDD" id="cd17041">
    <property type="entry name" value="Ubl_WDR48"/>
    <property type="match status" value="1"/>
</dbReference>
<dbReference type="CDD" id="cd00200">
    <property type="entry name" value="WD40"/>
    <property type="match status" value="1"/>
</dbReference>
<dbReference type="FunFam" id="2.130.10.10:FF:000543">
    <property type="entry name" value="WD repeat-containing protein 48 homolog"/>
    <property type="match status" value="1"/>
</dbReference>
<dbReference type="FunFam" id="2.130.10.10:FF:000984">
    <property type="entry name" value="WD repeat-containing protein 48 homolog"/>
    <property type="match status" value="1"/>
</dbReference>
<dbReference type="Gene3D" id="2.130.10.10">
    <property type="entry name" value="YVTN repeat-like/Quinoprotein amine dehydrogenase"/>
    <property type="match status" value="2"/>
</dbReference>
<dbReference type="InterPro" id="IPR020472">
    <property type="entry name" value="G-protein_beta_WD-40_rep"/>
</dbReference>
<dbReference type="InterPro" id="IPR015943">
    <property type="entry name" value="WD40/YVTN_repeat-like_dom_sf"/>
</dbReference>
<dbReference type="InterPro" id="IPR019775">
    <property type="entry name" value="WD40_repeat_CS"/>
</dbReference>
<dbReference type="InterPro" id="IPR036322">
    <property type="entry name" value="WD40_repeat_dom_sf"/>
</dbReference>
<dbReference type="InterPro" id="IPR001680">
    <property type="entry name" value="WD40_rpt"/>
</dbReference>
<dbReference type="InterPro" id="IPR051246">
    <property type="entry name" value="WDR48"/>
</dbReference>
<dbReference type="InterPro" id="IPR021772">
    <property type="entry name" value="WDR48/Bun107"/>
</dbReference>
<dbReference type="PANTHER" id="PTHR19862">
    <property type="entry name" value="WD REPEAT-CONTAINING PROTEIN 48"/>
    <property type="match status" value="1"/>
</dbReference>
<dbReference type="PANTHER" id="PTHR19862:SF14">
    <property type="entry name" value="WD REPEAT-CONTAINING PROTEIN 48"/>
    <property type="match status" value="1"/>
</dbReference>
<dbReference type="Pfam" id="PF11816">
    <property type="entry name" value="DUF3337"/>
    <property type="match status" value="1"/>
</dbReference>
<dbReference type="Pfam" id="PF00400">
    <property type="entry name" value="WD40"/>
    <property type="match status" value="6"/>
</dbReference>
<dbReference type="PRINTS" id="PR00320">
    <property type="entry name" value="GPROTEINBRPT"/>
</dbReference>
<dbReference type="SMART" id="SM00320">
    <property type="entry name" value="WD40"/>
    <property type="match status" value="8"/>
</dbReference>
<dbReference type="SUPFAM" id="SSF50978">
    <property type="entry name" value="WD40 repeat-like"/>
    <property type="match status" value="1"/>
</dbReference>
<dbReference type="PROSITE" id="PS00678">
    <property type="entry name" value="WD_REPEATS_1"/>
    <property type="match status" value="4"/>
</dbReference>
<dbReference type="PROSITE" id="PS50082">
    <property type="entry name" value="WD_REPEATS_2"/>
    <property type="match status" value="5"/>
</dbReference>
<dbReference type="PROSITE" id="PS50294">
    <property type="entry name" value="WD_REPEATS_REGION"/>
    <property type="match status" value="5"/>
</dbReference>
<feature type="chain" id="PRO_0000378987" description="WD repeat-containing protein 48 homolog">
    <location>
        <begin position="1"/>
        <end position="667"/>
    </location>
</feature>
<feature type="repeat" description="WD 1" evidence="4">
    <location>
        <begin position="26"/>
        <end position="65"/>
    </location>
</feature>
<feature type="repeat" description="WD 2" evidence="4">
    <location>
        <begin position="71"/>
        <end position="110"/>
    </location>
</feature>
<feature type="repeat" description="WD 3" evidence="4">
    <location>
        <begin position="113"/>
        <end position="152"/>
    </location>
</feature>
<feature type="repeat" description="WD 4" evidence="4">
    <location>
        <begin position="164"/>
        <end position="203"/>
    </location>
</feature>
<feature type="repeat" description="WD 5" evidence="4">
    <location>
        <begin position="206"/>
        <end position="245"/>
    </location>
</feature>
<feature type="repeat" description="WD 6" evidence="4">
    <location>
        <begin position="248"/>
        <end position="287"/>
    </location>
</feature>
<feature type="repeat" description="WD 7" evidence="4">
    <location>
        <begin position="290"/>
        <end position="329"/>
    </location>
</feature>
<feature type="repeat" description="WD 8" evidence="4">
    <location>
        <begin position="349"/>
        <end position="388"/>
    </location>
</feature>
<feature type="region of interest" description="Disordered" evidence="5">
    <location>
        <begin position="591"/>
        <end position="615"/>
    </location>
</feature>
<gene>
    <name evidence="2" type="primary">Uaf1</name>
    <name type="ORF">GJ15009</name>
</gene>
<evidence type="ECO:0000250" key="1"/>
<evidence type="ECO:0000250" key="2">
    <source>
        <dbReference type="UniProtKB" id="Q1LZ08"/>
    </source>
</evidence>
<evidence type="ECO:0000250" key="3">
    <source>
        <dbReference type="UniProtKB" id="Q8TAF3"/>
    </source>
</evidence>
<evidence type="ECO:0000255" key="4"/>
<evidence type="ECO:0000256" key="5">
    <source>
        <dbReference type="SAM" id="MobiDB-lite"/>
    </source>
</evidence>
<evidence type="ECO:0000305" key="6"/>
<evidence type="ECO:0000312" key="7">
    <source>
        <dbReference type="Proteomes" id="UP000008792"/>
    </source>
</evidence>
<organism evidence="7">
    <name type="scientific">Drosophila virilis</name>
    <name type="common">Fruit fly</name>
    <dbReference type="NCBI Taxonomy" id="7244"/>
    <lineage>
        <taxon>Eukaryota</taxon>
        <taxon>Metazoa</taxon>
        <taxon>Ecdysozoa</taxon>
        <taxon>Arthropoda</taxon>
        <taxon>Hexapoda</taxon>
        <taxon>Insecta</taxon>
        <taxon>Pterygota</taxon>
        <taxon>Neoptera</taxon>
        <taxon>Endopterygota</taxon>
        <taxon>Diptera</taxon>
        <taxon>Brachycera</taxon>
        <taxon>Muscomorpha</taxon>
        <taxon>Ephydroidea</taxon>
        <taxon>Drosophilidae</taxon>
        <taxon>Drosophila</taxon>
    </lineage>
</organism>
<reference key="1">
    <citation type="journal article" date="2007" name="Nature">
        <title>Evolution of genes and genomes on the Drosophila phylogeny.</title>
        <authorList>
            <consortium name="Drosophila 12 genomes consortium"/>
        </authorList>
    </citation>
    <scope>NUCLEOTIDE SEQUENCE [LARGE SCALE GENOMIC DNA]</scope>
    <source>
        <strain>Tucson 15010-1051.87</strain>
    </source>
</reference>
<keyword id="KW-1185">Reference proteome</keyword>
<keyword id="KW-0677">Repeat</keyword>
<keyword id="KW-0833">Ubl conjugation pathway</keyword>
<keyword id="KW-0853">WD repeat</keyword>
<protein>
    <recommendedName>
        <fullName>WD repeat-containing protein 48 homolog</fullName>
    </recommendedName>
</protein>
<accession>B4MFM2</accession>
<proteinExistence type="inferred from homology"/>